<gene>
    <name evidence="1" type="primary">rny</name>
    <name type="ordered locus">Dgeo_0162</name>
</gene>
<name>RNY_DEIGD</name>
<protein>
    <recommendedName>
        <fullName evidence="1">Ribonuclease Y</fullName>
        <shortName evidence="1">RNase Y</shortName>
        <ecNumber evidence="1">3.1.-.-</ecNumber>
    </recommendedName>
</protein>
<comment type="function">
    <text evidence="1">Endoribonuclease that initiates mRNA decay.</text>
</comment>
<comment type="subcellular location">
    <subcellularLocation>
        <location evidence="1">Cell membrane</location>
        <topology evidence="1">Single-pass membrane protein</topology>
    </subcellularLocation>
</comment>
<comment type="similarity">
    <text evidence="1">Belongs to the RNase Y family.</text>
</comment>
<feature type="chain" id="PRO_0000344862" description="Ribonuclease Y">
    <location>
        <begin position="1"/>
        <end position="562"/>
    </location>
</feature>
<feature type="transmembrane region" description="Helical" evidence="1">
    <location>
        <begin position="1"/>
        <end position="21"/>
    </location>
</feature>
<feature type="domain" description="KH" evidence="1">
    <location>
        <begin position="252"/>
        <end position="312"/>
    </location>
</feature>
<feature type="domain" description="HD" evidence="2">
    <location>
        <begin position="378"/>
        <end position="471"/>
    </location>
</feature>
<feature type="region of interest" description="Disordered" evidence="3">
    <location>
        <begin position="108"/>
        <end position="129"/>
    </location>
</feature>
<sequence>MNMLYFVLALLVGLAGGFFVGQARGRQQRATLDDQLQREARAEAERIRTQADAEARQLREQAEQRLQDAARRLQEADDRERQVTLQLEAQREQLQAVRAQIEAERARAAQDAARERETLSADRQETRREREELKREIERLNRRAEQLDARGDKLDALEERLEGQLHALAQQEAELAERSRQVDLKLYEVAGLTPEAAREQILRQLDAELEEEKAIRVKAMTERATAEARRTARNVIAQAIQRSASETSSQMSVSVVPIPNDAMKGRLIGREGRNIRAFEALTGVDLIIDDTPEAVILSSFNPVRREVARHVLEALVADGRIHPTRIEEMVHKAQDEMKSFIHAQGEEAAIESGVVGLKPGLVQLLGRMYFRSSYGQNVLKHSVQVAHLTGIMADELGLDAALARRAGLMHDIGKSIDREIEGTHVEIGINLAKRFGEPPEVIDAIAHHHDPENGETLYSVLVAAADAISAARPGARREELEAYVRRLEQLEQIAIAFPGVQQAYAIQAGREVRVLVQPEKVTDAQATLLAREIAGRIEQDMEYPGQVQVTVVRESRAVEVAR</sequence>
<accession>Q1J219</accession>
<evidence type="ECO:0000255" key="1">
    <source>
        <dbReference type="HAMAP-Rule" id="MF_00335"/>
    </source>
</evidence>
<evidence type="ECO:0000255" key="2">
    <source>
        <dbReference type="PROSITE-ProRule" id="PRU01175"/>
    </source>
</evidence>
<evidence type="ECO:0000256" key="3">
    <source>
        <dbReference type="SAM" id="MobiDB-lite"/>
    </source>
</evidence>
<keyword id="KW-1003">Cell membrane</keyword>
<keyword id="KW-0255">Endonuclease</keyword>
<keyword id="KW-0378">Hydrolase</keyword>
<keyword id="KW-0472">Membrane</keyword>
<keyword id="KW-0540">Nuclease</keyword>
<keyword id="KW-0694">RNA-binding</keyword>
<keyword id="KW-0812">Transmembrane</keyword>
<keyword id="KW-1133">Transmembrane helix</keyword>
<dbReference type="EC" id="3.1.-.-" evidence="1"/>
<dbReference type="EMBL" id="CP000359">
    <property type="protein sequence ID" value="ABF44465.1"/>
    <property type="molecule type" value="Genomic_DNA"/>
</dbReference>
<dbReference type="RefSeq" id="WP_011529312.1">
    <property type="nucleotide sequence ID" value="NC_008025.1"/>
</dbReference>
<dbReference type="SMR" id="Q1J219"/>
<dbReference type="STRING" id="319795.Dgeo_0162"/>
<dbReference type="KEGG" id="dge:Dgeo_0162"/>
<dbReference type="eggNOG" id="COG1418">
    <property type="taxonomic scope" value="Bacteria"/>
</dbReference>
<dbReference type="HOGENOM" id="CLU_028328_1_0_0"/>
<dbReference type="Proteomes" id="UP000002431">
    <property type="component" value="Chromosome"/>
</dbReference>
<dbReference type="GO" id="GO:0005886">
    <property type="term" value="C:plasma membrane"/>
    <property type="evidence" value="ECO:0007669"/>
    <property type="project" value="UniProtKB-SubCell"/>
</dbReference>
<dbReference type="GO" id="GO:0003723">
    <property type="term" value="F:RNA binding"/>
    <property type="evidence" value="ECO:0007669"/>
    <property type="project" value="UniProtKB-UniRule"/>
</dbReference>
<dbReference type="GO" id="GO:0004521">
    <property type="term" value="F:RNA endonuclease activity"/>
    <property type="evidence" value="ECO:0007669"/>
    <property type="project" value="UniProtKB-UniRule"/>
</dbReference>
<dbReference type="GO" id="GO:0006402">
    <property type="term" value="P:mRNA catabolic process"/>
    <property type="evidence" value="ECO:0007669"/>
    <property type="project" value="UniProtKB-UniRule"/>
</dbReference>
<dbReference type="CDD" id="cd00077">
    <property type="entry name" value="HDc"/>
    <property type="match status" value="1"/>
</dbReference>
<dbReference type="CDD" id="cd22431">
    <property type="entry name" value="KH-I_RNaseY"/>
    <property type="match status" value="1"/>
</dbReference>
<dbReference type="FunFam" id="1.10.3210.10:FF:000022">
    <property type="entry name" value="Ribonuclease Y"/>
    <property type="match status" value="1"/>
</dbReference>
<dbReference type="Gene3D" id="1.10.3210.10">
    <property type="entry name" value="Hypothetical protein af1432"/>
    <property type="match status" value="1"/>
</dbReference>
<dbReference type="HAMAP" id="MF_00335">
    <property type="entry name" value="RNase_Y"/>
    <property type="match status" value="1"/>
</dbReference>
<dbReference type="InterPro" id="IPR003607">
    <property type="entry name" value="HD/PDEase_dom"/>
</dbReference>
<dbReference type="InterPro" id="IPR006674">
    <property type="entry name" value="HD_domain"/>
</dbReference>
<dbReference type="InterPro" id="IPR006675">
    <property type="entry name" value="HDIG_dom"/>
</dbReference>
<dbReference type="InterPro" id="IPR004087">
    <property type="entry name" value="KH_dom"/>
</dbReference>
<dbReference type="InterPro" id="IPR004088">
    <property type="entry name" value="KH_dom_type_1"/>
</dbReference>
<dbReference type="InterPro" id="IPR036612">
    <property type="entry name" value="KH_dom_type_1_sf"/>
</dbReference>
<dbReference type="InterPro" id="IPR017705">
    <property type="entry name" value="Ribonuclease_Y"/>
</dbReference>
<dbReference type="InterPro" id="IPR022711">
    <property type="entry name" value="RNase_Y_N"/>
</dbReference>
<dbReference type="NCBIfam" id="TIGR00277">
    <property type="entry name" value="HDIG"/>
    <property type="match status" value="1"/>
</dbReference>
<dbReference type="NCBIfam" id="NF009344">
    <property type="entry name" value="PRK12705.1-1"/>
    <property type="match status" value="1"/>
</dbReference>
<dbReference type="NCBIfam" id="TIGR03319">
    <property type="entry name" value="RNase_Y"/>
    <property type="match status" value="1"/>
</dbReference>
<dbReference type="PANTHER" id="PTHR12826">
    <property type="entry name" value="RIBONUCLEASE Y"/>
    <property type="match status" value="1"/>
</dbReference>
<dbReference type="PANTHER" id="PTHR12826:SF15">
    <property type="entry name" value="RIBONUCLEASE Y"/>
    <property type="match status" value="1"/>
</dbReference>
<dbReference type="Pfam" id="PF01966">
    <property type="entry name" value="HD"/>
    <property type="match status" value="1"/>
</dbReference>
<dbReference type="Pfam" id="PF00013">
    <property type="entry name" value="KH_1"/>
    <property type="match status" value="1"/>
</dbReference>
<dbReference type="Pfam" id="PF12072">
    <property type="entry name" value="RNase_Y_N"/>
    <property type="match status" value="1"/>
</dbReference>
<dbReference type="SMART" id="SM00471">
    <property type="entry name" value="HDc"/>
    <property type="match status" value="1"/>
</dbReference>
<dbReference type="SMART" id="SM00322">
    <property type="entry name" value="KH"/>
    <property type="match status" value="1"/>
</dbReference>
<dbReference type="SUPFAM" id="SSF54791">
    <property type="entry name" value="Eukaryotic type KH-domain (KH-domain type I)"/>
    <property type="match status" value="1"/>
</dbReference>
<dbReference type="SUPFAM" id="SSF109604">
    <property type="entry name" value="HD-domain/PDEase-like"/>
    <property type="match status" value="1"/>
</dbReference>
<dbReference type="PROSITE" id="PS51831">
    <property type="entry name" value="HD"/>
    <property type="match status" value="1"/>
</dbReference>
<dbReference type="PROSITE" id="PS50084">
    <property type="entry name" value="KH_TYPE_1"/>
    <property type="match status" value="1"/>
</dbReference>
<reference key="1">
    <citation type="submission" date="2006-04" db="EMBL/GenBank/DDBJ databases">
        <title>Complete sequence of chromosome of Deinococcus geothermalis DSM 11300.</title>
        <authorList>
            <person name="Copeland A."/>
            <person name="Lucas S."/>
            <person name="Lapidus A."/>
            <person name="Barry K."/>
            <person name="Detter J.C."/>
            <person name="Glavina del Rio T."/>
            <person name="Hammon N."/>
            <person name="Israni S."/>
            <person name="Dalin E."/>
            <person name="Tice H."/>
            <person name="Pitluck S."/>
            <person name="Brettin T."/>
            <person name="Bruce D."/>
            <person name="Han C."/>
            <person name="Tapia R."/>
            <person name="Saunders E."/>
            <person name="Gilna P."/>
            <person name="Schmutz J."/>
            <person name="Larimer F."/>
            <person name="Land M."/>
            <person name="Hauser L."/>
            <person name="Kyrpides N."/>
            <person name="Kim E."/>
            <person name="Daly M.J."/>
            <person name="Fredrickson J.K."/>
            <person name="Makarova K.S."/>
            <person name="Gaidamakova E.K."/>
            <person name="Zhai M."/>
            <person name="Richardson P."/>
        </authorList>
    </citation>
    <scope>NUCLEOTIDE SEQUENCE [LARGE SCALE GENOMIC DNA]</scope>
    <source>
        <strain>DSM 11300 / CIP 105573 / AG-3a</strain>
    </source>
</reference>
<organism>
    <name type="scientific">Deinococcus geothermalis (strain DSM 11300 / CIP 105573 / AG-3a)</name>
    <dbReference type="NCBI Taxonomy" id="319795"/>
    <lineage>
        <taxon>Bacteria</taxon>
        <taxon>Thermotogati</taxon>
        <taxon>Deinococcota</taxon>
        <taxon>Deinococci</taxon>
        <taxon>Deinococcales</taxon>
        <taxon>Deinococcaceae</taxon>
        <taxon>Deinococcus</taxon>
    </lineage>
</organism>
<proteinExistence type="inferred from homology"/>